<accession>P62422</accession>
<proteinExistence type="inferred from homology"/>
<reference key="1">
    <citation type="journal article" date="2004" name="PLoS Biol.">
        <title>Phylogenomics of the reproductive parasite Wolbachia pipientis wMel: a streamlined genome overrun by mobile genetic elements.</title>
        <authorList>
            <person name="Wu M."/>
            <person name="Sun L.V."/>
            <person name="Vamathevan J.J."/>
            <person name="Riegler M."/>
            <person name="DeBoy R.T."/>
            <person name="Brownlie J.C."/>
            <person name="McGraw E.A."/>
            <person name="Martin W."/>
            <person name="Esser C."/>
            <person name="Ahmadinejad N."/>
            <person name="Wiegand C."/>
            <person name="Madupu R."/>
            <person name="Beanan M.J."/>
            <person name="Brinkac L.M."/>
            <person name="Daugherty S.C."/>
            <person name="Durkin A.S."/>
            <person name="Kolonay J.F."/>
            <person name="Nelson W.C."/>
            <person name="Mohamoud Y."/>
            <person name="Lee P."/>
            <person name="Berry K.J."/>
            <person name="Young M.B."/>
            <person name="Utterback T.R."/>
            <person name="Weidman J.F."/>
            <person name="Nierman W.C."/>
            <person name="Paulsen I.T."/>
            <person name="Nelson K.E."/>
            <person name="Tettelin H."/>
            <person name="O'Neill S.L."/>
            <person name="Eisen J.A."/>
        </authorList>
    </citation>
    <scope>NUCLEOTIDE SEQUENCE [LARGE SCALE GENOMIC DNA]</scope>
</reference>
<evidence type="ECO:0000255" key="1">
    <source>
        <dbReference type="HAMAP-Rule" id="MF_00145"/>
    </source>
</evidence>
<name>PGK_WOLPM</name>
<dbReference type="EC" id="2.7.2.3" evidence="1"/>
<dbReference type="EMBL" id="AE017196">
    <property type="protein sequence ID" value="AAS14814.1"/>
    <property type="molecule type" value="Genomic_DNA"/>
</dbReference>
<dbReference type="RefSeq" id="WP_010963073.1">
    <property type="nucleotide sequence ID" value="NZ_OX384529.1"/>
</dbReference>
<dbReference type="SMR" id="P62422"/>
<dbReference type="EnsemblBacteria" id="AAS14814">
    <property type="protein sequence ID" value="AAS14814"/>
    <property type="gene ID" value="WD_1167"/>
</dbReference>
<dbReference type="KEGG" id="wol:WD_1167"/>
<dbReference type="eggNOG" id="COG0126">
    <property type="taxonomic scope" value="Bacteria"/>
</dbReference>
<dbReference type="UniPathway" id="UPA00109">
    <property type="reaction ID" value="UER00185"/>
</dbReference>
<dbReference type="Proteomes" id="UP000008215">
    <property type="component" value="Chromosome"/>
</dbReference>
<dbReference type="GO" id="GO:0005829">
    <property type="term" value="C:cytosol"/>
    <property type="evidence" value="ECO:0007669"/>
    <property type="project" value="TreeGrafter"/>
</dbReference>
<dbReference type="GO" id="GO:0043531">
    <property type="term" value="F:ADP binding"/>
    <property type="evidence" value="ECO:0007669"/>
    <property type="project" value="TreeGrafter"/>
</dbReference>
<dbReference type="GO" id="GO:0005524">
    <property type="term" value="F:ATP binding"/>
    <property type="evidence" value="ECO:0007669"/>
    <property type="project" value="UniProtKB-KW"/>
</dbReference>
<dbReference type="GO" id="GO:0004618">
    <property type="term" value="F:phosphoglycerate kinase activity"/>
    <property type="evidence" value="ECO:0007669"/>
    <property type="project" value="UniProtKB-UniRule"/>
</dbReference>
<dbReference type="GO" id="GO:0006094">
    <property type="term" value="P:gluconeogenesis"/>
    <property type="evidence" value="ECO:0007669"/>
    <property type="project" value="TreeGrafter"/>
</dbReference>
<dbReference type="GO" id="GO:0006096">
    <property type="term" value="P:glycolytic process"/>
    <property type="evidence" value="ECO:0007669"/>
    <property type="project" value="UniProtKB-UniRule"/>
</dbReference>
<dbReference type="FunFam" id="3.40.50.1260:FF:000006">
    <property type="entry name" value="Phosphoglycerate kinase"/>
    <property type="match status" value="1"/>
</dbReference>
<dbReference type="FunFam" id="3.40.50.1260:FF:000031">
    <property type="entry name" value="Phosphoglycerate kinase 1"/>
    <property type="match status" value="1"/>
</dbReference>
<dbReference type="Gene3D" id="3.40.50.1260">
    <property type="entry name" value="Phosphoglycerate kinase, N-terminal domain"/>
    <property type="match status" value="2"/>
</dbReference>
<dbReference type="HAMAP" id="MF_00145">
    <property type="entry name" value="Phosphoglyc_kinase"/>
    <property type="match status" value="1"/>
</dbReference>
<dbReference type="InterPro" id="IPR001576">
    <property type="entry name" value="Phosphoglycerate_kinase"/>
</dbReference>
<dbReference type="InterPro" id="IPR015911">
    <property type="entry name" value="Phosphoglycerate_kinase_CS"/>
</dbReference>
<dbReference type="InterPro" id="IPR015824">
    <property type="entry name" value="Phosphoglycerate_kinase_N"/>
</dbReference>
<dbReference type="InterPro" id="IPR036043">
    <property type="entry name" value="Phosphoglycerate_kinase_sf"/>
</dbReference>
<dbReference type="PANTHER" id="PTHR11406">
    <property type="entry name" value="PHOSPHOGLYCERATE KINASE"/>
    <property type="match status" value="1"/>
</dbReference>
<dbReference type="PANTHER" id="PTHR11406:SF23">
    <property type="entry name" value="PHOSPHOGLYCERATE KINASE 1, CHLOROPLASTIC-RELATED"/>
    <property type="match status" value="1"/>
</dbReference>
<dbReference type="Pfam" id="PF00162">
    <property type="entry name" value="PGK"/>
    <property type="match status" value="1"/>
</dbReference>
<dbReference type="PIRSF" id="PIRSF000724">
    <property type="entry name" value="Pgk"/>
    <property type="match status" value="1"/>
</dbReference>
<dbReference type="PRINTS" id="PR00477">
    <property type="entry name" value="PHGLYCKINASE"/>
</dbReference>
<dbReference type="SUPFAM" id="SSF53748">
    <property type="entry name" value="Phosphoglycerate kinase"/>
    <property type="match status" value="1"/>
</dbReference>
<dbReference type="PROSITE" id="PS00111">
    <property type="entry name" value="PGLYCERATE_KINASE"/>
    <property type="match status" value="1"/>
</dbReference>
<gene>
    <name evidence="1" type="primary">pgk</name>
    <name type="ordered locus">WD_1167</name>
</gene>
<protein>
    <recommendedName>
        <fullName evidence="1">Phosphoglycerate kinase</fullName>
        <ecNumber evidence="1">2.7.2.3</ecNumber>
    </recommendedName>
</protein>
<feature type="chain" id="PRO_0000146039" description="Phosphoglycerate kinase">
    <location>
        <begin position="1"/>
        <end position="398"/>
    </location>
</feature>
<feature type="binding site" evidence="1">
    <location>
        <begin position="21"/>
        <end position="23"/>
    </location>
    <ligand>
        <name>substrate</name>
    </ligand>
</feature>
<feature type="binding site" evidence="1">
    <location>
        <position position="36"/>
    </location>
    <ligand>
        <name>substrate</name>
    </ligand>
</feature>
<feature type="binding site" evidence="1">
    <location>
        <begin position="59"/>
        <end position="62"/>
    </location>
    <ligand>
        <name>substrate</name>
    </ligand>
</feature>
<feature type="binding site" evidence="1">
    <location>
        <position position="117"/>
    </location>
    <ligand>
        <name>substrate</name>
    </ligand>
</feature>
<feature type="binding site" evidence="1">
    <location>
        <position position="150"/>
    </location>
    <ligand>
        <name>substrate</name>
    </ligand>
</feature>
<feature type="binding site" evidence="1">
    <location>
        <position position="200"/>
    </location>
    <ligand>
        <name>ATP</name>
        <dbReference type="ChEBI" id="CHEBI:30616"/>
    </ligand>
</feature>
<feature type="binding site" evidence="1">
    <location>
        <position position="321"/>
    </location>
    <ligand>
        <name>ATP</name>
        <dbReference type="ChEBI" id="CHEBI:30616"/>
    </ligand>
</feature>
<feature type="binding site" evidence="1">
    <location>
        <begin position="351"/>
        <end position="354"/>
    </location>
    <ligand>
        <name>ATP</name>
        <dbReference type="ChEBI" id="CHEBI:30616"/>
    </ligand>
</feature>
<keyword id="KW-0067">ATP-binding</keyword>
<keyword id="KW-0963">Cytoplasm</keyword>
<keyword id="KW-0324">Glycolysis</keyword>
<keyword id="KW-0418">Kinase</keyword>
<keyword id="KW-0547">Nucleotide-binding</keyword>
<keyword id="KW-0808">Transferase</keyword>
<sequence length="398" mass="43305">MNIPSIENCDLHNKTVLLRVDFNVPIKDGEIRDVTRILRALPTIQYLVNASAKIIIISHFGRPKARDNNLSLKNVIDTLSQLLNKKVKFIDDCFGEKVQRAVSVMDAGDIILLENLRFYKEEEQSDSNFAKQLASLADIYVNDAFSCSHRAHASISRITEFLPSYAGFCLQDELKYLEKAVSFKAKPITAIVGGAKISTKIKVLMKLTEKVNYLVLGGAIANNFLSFSKVNIGKSFFQNGVDDLLHNILETANKNNCKIVVPEDVLVAVNSDYSTSISRRTESILDGDIILDIGPQTLSTISSIIASSKTLLWNGPIGVFEHSAFASGTIGVMKIVSDLTHKGKLTSIIGGGDSLSAISAAGLADKDFTYVSTGGGAFLDWLSGDEMPGVAALQKRLD</sequence>
<comment type="catalytic activity">
    <reaction evidence="1">
        <text>(2R)-3-phosphoglycerate + ATP = (2R)-3-phospho-glyceroyl phosphate + ADP</text>
        <dbReference type="Rhea" id="RHEA:14801"/>
        <dbReference type="ChEBI" id="CHEBI:30616"/>
        <dbReference type="ChEBI" id="CHEBI:57604"/>
        <dbReference type="ChEBI" id="CHEBI:58272"/>
        <dbReference type="ChEBI" id="CHEBI:456216"/>
        <dbReference type="EC" id="2.7.2.3"/>
    </reaction>
</comment>
<comment type="pathway">
    <text evidence="1">Carbohydrate degradation; glycolysis; pyruvate from D-glyceraldehyde 3-phosphate: step 2/5.</text>
</comment>
<comment type="subunit">
    <text evidence="1">Monomer.</text>
</comment>
<comment type="subcellular location">
    <subcellularLocation>
        <location evidence="1">Cytoplasm</location>
    </subcellularLocation>
</comment>
<comment type="similarity">
    <text evidence="1">Belongs to the phosphoglycerate kinase family.</text>
</comment>
<organism>
    <name type="scientific">Wolbachia pipientis wMel</name>
    <dbReference type="NCBI Taxonomy" id="163164"/>
    <lineage>
        <taxon>Bacteria</taxon>
        <taxon>Pseudomonadati</taxon>
        <taxon>Pseudomonadota</taxon>
        <taxon>Alphaproteobacteria</taxon>
        <taxon>Rickettsiales</taxon>
        <taxon>Anaplasmataceae</taxon>
        <taxon>Wolbachieae</taxon>
        <taxon>Wolbachia</taxon>
    </lineage>
</organism>